<organism>
    <name type="scientific">Deinococcus radiodurans (strain ATCC 13939 / DSM 20539 / JCM 16871 / CCUG 27074 / LMG 4051 / NBRC 15346 / NCIMB 9279 / VKM B-1422 / R1)</name>
    <dbReference type="NCBI Taxonomy" id="243230"/>
    <lineage>
        <taxon>Bacteria</taxon>
        <taxon>Thermotogati</taxon>
        <taxon>Deinococcota</taxon>
        <taxon>Deinococci</taxon>
        <taxon>Deinococcales</taxon>
        <taxon>Deinococcaceae</taxon>
        <taxon>Deinococcus</taxon>
    </lineage>
</organism>
<name>GUAA_DEIRA</name>
<dbReference type="EC" id="6.3.5.2"/>
<dbReference type="EMBL" id="AE000513">
    <property type="protein sequence ID" value="AAF11428.1"/>
    <property type="molecule type" value="Genomic_DNA"/>
</dbReference>
<dbReference type="PIR" id="B75342">
    <property type="entry name" value="B75342"/>
</dbReference>
<dbReference type="RefSeq" id="NP_295597.1">
    <property type="nucleotide sequence ID" value="NC_001263.1"/>
</dbReference>
<dbReference type="RefSeq" id="WP_010888509.1">
    <property type="nucleotide sequence ID" value="NC_001263.1"/>
</dbReference>
<dbReference type="SMR" id="Q9RT91"/>
<dbReference type="FunCoup" id="Q9RT91">
    <property type="interactions" value="517"/>
</dbReference>
<dbReference type="STRING" id="243230.DR_1874"/>
<dbReference type="MEROPS" id="C26.957"/>
<dbReference type="PaxDb" id="243230-DR_1874"/>
<dbReference type="EnsemblBacteria" id="AAF11428">
    <property type="protein sequence ID" value="AAF11428"/>
    <property type="gene ID" value="DR_1874"/>
</dbReference>
<dbReference type="GeneID" id="69518113"/>
<dbReference type="KEGG" id="dra:DR_1874"/>
<dbReference type="PATRIC" id="fig|243230.17.peg.2086"/>
<dbReference type="eggNOG" id="COG0518">
    <property type="taxonomic scope" value="Bacteria"/>
</dbReference>
<dbReference type="eggNOG" id="COG0519">
    <property type="taxonomic scope" value="Bacteria"/>
</dbReference>
<dbReference type="HOGENOM" id="CLU_014340_0_5_0"/>
<dbReference type="InParanoid" id="Q9RT91"/>
<dbReference type="OrthoDB" id="9802219at2"/>
<dbReference type="UniPathway" id="UPA00189">
    <property type="reaction ID" value="UER00296"/>
</dbReference>
<dbReference type="Proteomes" id="UP000002524">
    <property type="component" value="Chromosome 1"/>
</dbReference>
<dbReference type="GO" id="GO:0005829">
    <property type="term" value="C:cytosol"/>
    <property type="evidence" value="ECO:0000318"/>
    <property type="project" value="GO_Central"/>
</dbReference>
<dbReference type="GO" id="GO:0005524">
    <property type="term" value="F:ATP binding"/>
    <property type="evidence" value="ECO:0007669"/>
    <property type="project" value="UniProtKB-UniRule"/>
</dbReference>
<dbReference type="GO" id="GO:0003921">
    <property type="term" value="F:GMP synthase activity"/>
    <property type="evidence" value="ECO:0000318"/>
    <property type="project" value="GO_Central"/>
</dbReference>
<dbReference type="GO" id="GO:0006177">
    <property type="term" value="P:GMP biosynthetic process"/>
    <property type="evidence" value="ECO:0000318"/>
    <property type="project" value="GO_Central"/>
</dbReference>
<dbReference type="CDD" id="cd01742">
    <property type="entry name" value="GATase1_GMP_Synthase"/>
    <property type="match status" value="1"/>
</dbReference>
<dbReference type="CDD" id="cd01997">
    <property type="entry name" value="GMP_synthase_C"/>
    <property type="match status" value="1"/>
</dbReference>
<dbReference type="FunFam" id="3.30.300.10:FF:000002">
    <property type="entry name" value="GMP synthase [glutamine-hydrolyzing]"/>
    <property type="match status" value="1"/>
</dbReference>
<dbReference type="FunFam" id="3.40.50.620:FF:000001">
    <property type="entry name" value="GMP synthase [glutamine-hydrolyzing]"/>
    <property type="match status" value="1"/>
</dbReference>
<dbReference type="FunFam" id="3.40.50.880:FF:000001">
    <property type="entry name" value="GMP synthase [glutamine-hydrolyzing]"/>
    <property type="match status" value="1"/>
</dbReference>
<dbReference type="Gene3D" id="3.30.300.10">
    <property type="match status" value="1"/>
</dbReference>
<dbReference type="Gene3D" id="3.40.50.880">
    <property type="match status" value="1"/>
</dbReference>
<dbReference type="Gene3D" id="3.40.50.620">
    <property type="entry name" value="HUPs"/>
    <property type="match status" value="1"/>
</dbReference>
<dbReference type="HAMAP" id="MF_00344">
    <property type="entry name" value="GMP_synthase"/>
    <property type="match status" value="1"/>
</dbReference>
<dbReference type="InterPro" id="IPR029062">
    <property type="entry name" value="Class_I_gatase-like"/>
</dbReference>
<dbReference type="InterPro" id="IPR017926">
    <property type="entry name" value="GATASE"/>
</dbReference>
<dbReference type="InterPro" id="IPR001674">
    <property type="entry name" value="GMP_synth_C"/>
</dbReference>
<dbReference type="InterPro" id="IPR004739">
    <property type="entry name" value="GMP_synth_GATase"/>
</dbReference>
<dbReference type="InterPro" id="IPR022955">
    <property type="entry name" value="GMP_synthase"/>
</dbReference>
<dbReference type="InterPro" id="IPR025777">
    <property type="entry name" value="GMPS_ATP_PPase_dom"/>
</dbReference>
<dbReference type="InterPro" id="IPR022310">
    <property type="entry name" value="NAD/GMP_synthase"/>
</dbReference>
<dbReference type="InterPro" id="IPR014729">
    <property type="entry name" value="Rossmann-like_a/b/a_fold"/>
</dbReference>
<dbReference type="NCBIfam" id="TIGR00884">
    <property type="entry name" value="guaA_Cterm"/>
    <property type="match status" value="1"/>
</dbReference>
<dbReference type="NCBIfam" id="TIGR00888">
    <property type="entry name" value="guaA_Nterm"/>
    <property type="match status" value="1"/>
</dbReference>
<dbReference type="NCBIfam" id="NF000848">
    <property type="entry name" value="PRK00074.1"/>
    <property type="match status" value="1"/>
</dbReference>
<dbReference type="PANTHER" id="PTHR11922:SF2">
    <property type="entry name" value="GMP SYNTHASE [GLUTAMINE-HYDROLYZING]"/>
    <property type="match status" value="1"/>
</dbReference>
<dbReference type="PANTHER" id="PTHR11922">
    <property type="entry name" value="GMP SYNTHASE-RELATED"/>
    <property type="match status" value="1"/>
</dbReference>
<dbReference type="Pfam" id="PF00117">
    <property type="entry name" value="GATase"/>
    <property type="match status" value="1"/>
</dbReference>
<dbReference type="Pfam" id="PF00958">
    <property type="entry name" value="GMP_synt_C"/>
    <property type="match status" value="1"/>
</dbReference>
<dbReference type="Pfam" id="PF02540">
    <property type="entry name" value="NAD_synthase"/>
    <property type="match status" value="1"/>
</dbReference>
<dbReference type="PRINTS" id="PR00097">
    <property type="entry name" value="ANTSNTHASEII"/>
</dbReference>
<dbReference type="PRINTS" id="PR00099">
    <property type="entry name" value="CPSGATASE"/>
</dbReference>
<dbReference type="PRINTS" id="PR00096">
    <property type="entry name" value="GATASE"/>
</dbReference>
<dbReference type="SUPFAM" id="SSF52402">
    <property type="entry name" value="Adenine nucleotide alpha hydrolases-like"/>
    <property type="match status" value="1"/>
</dbReference>
<dbReference type="SUPFAM" id="SSF52317">
    <property type="entry name" value="Class I glutamine amidotransferase-like"/>
    <property type="match status" value="1"/>
</dbReference>
<dbReference type="SUPFAM" id="SSF54810">
    <property type="entry name" value="GMP synthetase C-terminal dimerisation domain"/>
    <property type="match status" value="1"/>
</dbReference>
<dbReference type="PROSITE" id="PS51273">
    <property type="entry name" value="GATASE_TYPE_1"/>
    <property type="match status" value="1"/>
</dbReference>
<dbReference type="PROSITE" id="PS51553">
    <property type="entry name" value="GMPS_ATP_PPASE"/>
    <property type="match status" value="1"/>
</dbReference>
<proteinExistence type="inferred from homology"/>
<protein>
    <recommendedName>
        <fullName>GMP synthase [glutamine-hydrolyzing]</fullName>
        <ecNumber>6.3.5.2</ecNumber>
    </recommendedName>
    <alternativeName>
        <fullName>GMP synthetase</fullName>
    </alternativeName>
    <alternativeName>
        <fullName>Glutamine amidotransferase</fullName>
    </alternativeName>
</protein>
<gene>
    <name type="primary">guaA</name>
    <name type="ordered locus">DR_1874</name>
</gene>
<feature type="chain" id="PRO_0000140121" description="GMP synthase [glutamine-hydrolyzing]">
    <location>
        <begin position="1"/>
        <end position="506"/>
    </location>
</feature>
<feature type="domain" description="Glutamine amidotransferase type-1">
    <location>
        <begin position="2"/>
        <end position="190"/>
    </location>
</feature>
<feature type="domain" description="GMPS ATP-PPase">
    <location>
        <begin position="191"/>
        <end position="381"/>
    </location>
</feature>
<feature type="active site" description="Nucleophile" evidence="1">
    <location>
        <position position="79"/>
    </location>
</feature>
<feature type="active site" evidence="1">
    <location>
        <position position="165"/>
    </location>
</feature>
<feature type="active site" evidence="1">
    <location>
        <position position="167"/>
    </location>
</feature>
<feature type="binding site" evidence="1">
    <location>
        <begin position="219"/>
        <end position="225"/>
    </location>
    <ligand>
        <name>ATP</name>
        <dbReference type="ChEBI" id="CHEBI:30616"/>
    </ligand>
</feature>
<comment type="function">
    <text evidence="1">Catalyzes the synthesis of GMP from XMP.</text>
</comment>
<comment type="catalytic activity">
    <reaction>
        <text>XMP + L-glutamine + ATP + H2O = GMP + L-glutamate + AMP + diphosphate + 2 H(+)</text>
        <dbReference type="Rhea" id="RHEA:11680"/>
        <dbReference type="ChEBI" id="CHEBI:15377"/>
        <dbReference type="ChEBI" id="CHEBI:15378"/>
        <dbReference type="ChEBI" id="CHEBI:29985"/>
        <dbReference type="ChEBI" id="CHEBI:30616"/>
        <dbReference type="ChEBI" id="CHEBI:33019"/>
        <dbReference type="ChEBI" id="CHEBI:57464"/>
        <dbReference type="ChEBI" id="CHEBI:58115"/>
        <dbReference type="ChEBI" id="CHEBI:58359"/>
        <dbReference type="ChEBI" id="CHEBI:456215"/>
        <dbReference type="EC" id="6.3.5.2"/>
    </reaction>
</comment>
<comment type="pathway">
    <text>Purine metabolism; GMP biosynthesis; GMP from XMP (L-Gln route): step 1/1.</text>
</comment>
<comment type="subunit">
    <text evidence="1">Homodimer.</text>
</comment>
<keyword id="KW-0067">ATP-binding</keyword>
<keyword id="KW-0315">Glutamine amidotransferase</keyword>
<keyword id="KW-0332">GMP biosynthesis</keyword>
<keyword id="KW-0436">Ligase</keyword>
<keyword id="KW-0547">Nucleotide-binding</keyword>
<keyword id="KW-0658">Purine biosynthesis</keyword>
<keyword id="KW-1185">Reference proteome</keyword>
<sequence length="506" mass="55513">MSIVILDFGSQFTRLITRRFRELGAYSVILPGTASLERIQQENPQGIVLSGGPSSVYDEGAPRPAPGVLDLNVPILGVCYGMQYLAHEAGGDVKRAGKREYGKADLTEYGGRLFEGIQGEFVAWMSHSDSVTQLPQGYQVVARTEHTPVTAIENNDTRRYGVQFHPEVVHTPKGGQMLANFLDICGVTRDWNAEHIVDELIEGVRAQVGDTGRVLLGISGGVDSSTLALLLAKAVGERLTAVFIDHGLLRLGEREQVEAALTPLGVNLVTVDAKDEFLGQLAGVSDPEQKRKIIGREFIRAFERETAKLGDFEFLAQGTLYPDVIESAGGEGAANIKSHHNVGGLPDDVQFKLVEPFRTLFKDEVREIARLLGLPDHIRMRHPFPGPGLAIRCLGEVTAEKVDILQRVDDIFISGLREFGLYDGCSQALAVLTPIQSVGVMGDERTYSYTAALRAVTTDDFMTAEWARLPYDFLATMSNRIVNQVHEINRVVYDITGKPPATIEWE</sequence>
<evidence type="ECO:0000250" key="1"/>
<accession>Q9RT91</accession>
<reference key="1">
    <citation type="journal article" date="1999" name="Science">
        <title>Genome sequence of the radioresistant bacterium Deinococcus radiodurans R1.</title>
        <authorList>
            <person name="White O."/>
            <person name="Eisen J.A."/>
            <person name="Heidelberg J.F."/>
            <person name="Hickey E.K."/>
            <person name="Peterson J.D."/>
            <person name="Dodson R.J."/>
            <person name="Haft D.H."/>
            <person name="Gwinn M.L."/>
            <person name="Nelson W.C."/>
            <person name="Richardson D.L."/>
            <person name="Moffat K.S."/>
            <person name="Qin H."/>
            <person name="Jiang L."/>
            <person name="Pamphile W."/>
            <person name="Crosby M."/>
            <person name="Shen M."/>
            <person name="Vamathevan J.J."/>
            <person name="Lam P."/>
            <person name="McDonald L.A."/>
            <person name="Utterback T.R."/>
            <person name="Zalewski C."/>
            <person name="Makarova K.S."/>
            <person name="Aravind L."/>
            <person name="Daly M.J."/>
            <person name="Minton K.W."/>
            <person name="Fleischmann R.D."/>
            <person name="Ketchum K.A."/>
            <person name="Nelson K.E."/>
            <person name="Salzberg S.L."/>
            <person name="Smith H.O."/>
            <person name="Venter J.C."/>
            <person name="Fraser C.M."/>
        </authorList>
    </citation>
    <scope>NUCLEOTIDE SEQUENCE [LARGE SCALE GENOMIC DNA]</scope>
    <source>
        <strain>ATCC 13939 / DSM 20539 / JCM 16871 / CCUG 27074 / LMG 4051 / NBRC 15346 / NCIMB 9279 / VKM B-1422 / R1</strain>
    </source>
</reference>